<proteinExistence type="evidence at protein level"/>
<name>O10AG_HUMAN</name>
<organism>
    <name type="scientific">Homo sapiens</name>
    <name type="common">Human</name>
    <dbReference type="NCBI Taxonomy" id="9606"/>
    <lineage>
        <taxon>Eukaryota</taxon>
        <taxon>Metazoa</taxon>
        <taxon>Chordata</taxon>
        <taxon>Craniata</taxon>
        <taxon>Vertebrata</taxon>
        <taxon>Euteleostomi</taxon>
        <taxon>Mammalia</taxon>
        <taxon>Eutheria</taxon>
        <taxon>Euarchontoglires</taxon>
        <taxon>Primates</taxon>
        <taxon>Haplorrhini</taxon>
        <taxon>Catarrhini</taxon>
        <taxon>Hominidae</taxon>
        <taxon>Homo</taxon>
    </lineage>
</organism>
<dbReference type="EMBL" id="AB065594">
    <property type="protein sequence ID" value="BAC05822.1"/>
    <property type="molecule type" value="Genomic_DNA"/>
</dbReference>
<dbReference type="EMBL" id="CH471076">
    <property type="protein sequence ID" value="EAW73692.1"/>
    <property type="molecule type" value="Genomic_DNA"/>
</dbReference>
<dbReference type="EMBL" id="BC136890">
    <property type="protein sequence ID" value="AAI36891.1"/>
    <property type="molecule type" value="mRNA"/>
</dbReference>
<dbReference type="EMBL" id="BC136891">
    <property type="protein sequence ID" value="AAI36892.1"/>
    <property type="molecule type" value="mRNA"/>
</dbReference>
<dbReference type="EMBL" id="BK004519">
    <property type="protein sequence ID" value="DAA04917.1"/>
    <property type="molecule type" value="Genomic_DNA"/>
</dbReference>
<dbReference type="RefSeq" id="NP_001005491.1">
    <property type="nucleotide sequence ID" value="NM_001005491.1"/>
</dbReference>
<dbReference type="SMR" id="Q8NH19"/>
<dbReference type="BioGRID" id="129411">
    <property type="interactions" value="5"/>
</dbReference>
<dbReference type="FunCoup" id="Q8NH19">
    <property type="interactions" value="460"/>
</dbReference>
<dbReference type="IntAct" id="Q8NH19">
    <property type="interactions" value="5"/>
</dbReference>
<dbReference type="STRING" id="9606.ENSP00000311477"/>
<dbReference type="GlyCosmos" id="Q8NH19">
    <property type="glycosylation" value="1 site, No reported glycans"/>
</dbReference>
<dbReference type="GlyGen" id="Q8NH19">
    <property type="glycosylation" value="1 site"/>
</dbReference>
<dbReference type="iPTMnet" id="Q8NH19"/>
<dbReference type="PhosphoSitePlus" id="Q8NH19"/>
<dbReference type="BioMuta" id="OR10AG1"/>
<dbReference type="DMDM" id="38503050"/>
<dbReference type="PaxDb" id="9606-ENSP00000311477"/>
<dbReference type="PeptideAtlas" id="Q8NH19"/>
<dbReference type="Antibodypedia" id="58952">
    <property type="antibodies" value="99 antibodies from 22 providers"/>
</dbReference>
<dbReference type="DNASU" id="282770"/>
<dbReference type="Ensembl" id="ENST00000312345.4">
    <property type="protein sequence ID" value="ENSP00000311477.2"/>
    <property type="gene ID" value="ENSG00000174970.5"/>
</dbReference>
<dbReference type="GeneID" id="282770"/>
<dbReference type="KEGG" id="hsa:282770"/>
<dbReference type="UCSC" id="uc010rit.2">
    <property type="organism name" value="human"/>
</dbReference>
<dbReference type="AGR" id="HGNC:19607"/>
<dbReference type="CTD" id="282770"/>
<dbReference type="GeneCards" id="OR10AG1"/>
<dbReference type="HGNC" id="HGNC:19607">
    <property type="gene designation" value="OR10AG1"/>
</dbReference>
<dbReference type="HPA" id="ENSG00000174970">
    <property type="expression patterns" value="Not detected"/>
</dbReference>
<dbReference type="neXtProt" id="NX_Q8NH19"/>
<dbReference type="PharmGKB" id="PA134929321"/>
<dbReference type="VEuPathDB" id="HostDB:ENSG00000174970"/>
<dbReference type="eggNOG" id="ENOG502SI62">
    <property type="taxonomic scope" value="Eukaryota"/>
</dbReference>
<dbReference type="GeneTree" id="ENSGT01120000271813"/>
<dbReference type="HOGENOM" id="CLU_012526_5_5_1"/>
<dbReference type="InParanoid" id="Q8NH19"/>
<dbReference type="PAN-GO" id="Q8NH19">
    <property type="GO annotations" value="1 GO annotation based on evolutionary models"/>
</dbReference>
<dbReference type="PhylomeDB" id="Q8NH19"/>
<dbReference type="TreeFam" id="TF337350"/>
<dbReference type="PathwayCommons" id="Q8NH19"/>
<dbReference type="Reactome" id="R-HSA-9752946">
    <property type="pathway name" value="Expression and translocation of olfactory receptors"/>
</dbReference>
<dbReference type="SignaLink" id="Q8NH19"/>
<dbReference type="BioGRID-ORCS" id="282770">
    <property type="hits" value="7 hits in 749 CRISPR screens"/>
</dbReference>
<dbReference type="GeneWiki" id="OR10AG1"/>
<dbReference type="GenomeRNAi" id="282770"/>
<dbReference type="Pharos" id="Q8NH19">
    <property type="development level" value="Tdark"/>
</dbReference>
<dbReference type="PRO" id="PR:Q8NH19"/>
<dbReference type="Proteomes" id="UP000005640">
    <property type="component" value="Chromosome 11"/>
</dbReference>
<dbReference type="RNAct" id="Q8NH19">
    <property type="molecule type" value="protein"/>
</dbReference>
<dbReference type="ExpressionAtlas" id="Q8NH19">
    <property type="expression patterns" value="baseline and differential"/>
</dbReference>
<dbReference type="GO" id="GO:0005886">
    <property type="term" value="C:plasma membrane"/>
    <property type="evidence" value="ECO:0000318"/>
    <property type="project" value="GO_Central"/>
</dbReference>
<dbReference type="GO" id="GO:0004930">
    <property type="term" value="F:G protein-coupled receptor activity"/>
    <property type="evidence" value="ECO:0007669"/>
    <property type="project" value="UniProtKB-KW"/>
</dbReference>
<dbReference type="GO" id="GO:0004984">
    <property type="term" value="F:olfactory receptor activity"/>
    <property type="evidence" value="ECO:0000318"/>
    <property type="project" value="GO_Central"/>
</dbReference>
<dbReference type="GO" id="GO:0050911">
    <property type="term" value="P:detection of chemical stimulus involved in sensory perception of smell"/>
    <property type="evidence" value="ECO:0000318"/>
    <property type="project" value="GO_Central"/>
</dbReference>
<dbReference type="CDD" id="cd15225">
    <property type="entry name" value="7tmA_OR10A-like"/>
    <property type="match status" value="1"/>
</dbReference>
<dbReference type="FunFam" id="1.20.1070.10:FF:000001">
    <property type="entry name" value="Olfactory receptor"/>
    <property type="match status" value="1"/>
</dbReference>
<dbReference type="Gene3D" id="1.20.1070.10">
    <property type="entry name" value="Rhodopsin 7-helix transmembrane proteins"/>
    <property type="match status" value="1"/>
</dbReference>
<dbReference type="InterPro" id="IPR000276">
    <property type="entry name" value="GPCR_Rhodpsn"/>
</dbReference>
<dbReference type="InterPro" id="IPR017452">
    <property type="entry name" value="GPCR_Rhodpsn_7TM"/>
</dbReference>
<dbReference type="InterPro" id="IPR000725">
    <property type="entry name" value="Olfact_rcpt"/>
</dbReference>
<dbReference type="PANTHER" id="PTHR26453">
    <property type="entry name" value="OLFACTORY RECEPTOR"/>
    <property type="match status" value="1"/>
</dbReference>
<dbReference type="Pfam" id="PF13853">
    <property type="entry name" value="7tm_4"/>
    <property type="match status" value="1"/>
</dbReference>
<dbReference type="PRINTS" id="PR00237">
    <property type="entry name" value="GPCRRHODOPSN"/>
</dbReference>
<dbReference type="PRINTS" id="PR00245">
    <property type="entry name" value="OLFACTORYR"/>
</dbReference>
<dbReference type="SUPFAM" id="SSF81321">
    <property type="entry name" value="Family A G protein-coupled receptor-like"/>
    <property type="match status" value="1"/>
</dbReference>
<dbReference type="PROSITE" id="PS00237">
    <property type="entry name" value="G_PROTEIN_RECEP_F1_1"/>
    <property type="match status" value="1"/>
</dbReference>
<dbReference type="PROSITE" id="PS50262">
    <property type="entry name" value="G_PROTEIN_RECEP_F1_2"/>
    <property type="match status" value="1"/>
</dbReference>
<accession>Q8NH19</accession>
<accession>B2RNH4</accession>
<accession>Q6IEU3</accession>
<feature type="chain" id="PRO_0000150692" description="Olfactory receptor 10AG1">
    <location>
        <begin position="1"/>
        <end position="301"/>
    </location>
</feature>
<feature type="topological domain" description="Extracellular" evidence="1">
    <location>
        <begin position="1"/>
        <end position="16"/>
    </location>
</feature>
<feature type="transmembrane region" description="Helical; Name=1" evidence="1">
    <location>
        <begin position="17"/>
        <end position="37"/>
    </location>
</feature>
<feature type="topological domain" description="Cytoplasmic" evidence="1">
    <location>
        <begin position="38"/>
        <end position="45"/>
    </location>
</feature>
<feature type="transmembrane region" description="Helical; Name=2" evidence="1">
    <location>
        <begin position="46"/>
        <end position="66"/>
    </location>
</feature>
<feature type="topological domain" description="Extracellular" evidence="1">
    <location>
        <begin position="67"/>
        <end position="90"/>
    </location>
</feature>
<feature type="transmembrane region" description="Helical; Name=3" evidence="1">
    <location>
        <begin position="91"/>
        <end position="111"/>
    </location>
</feature>
<feature type="topological domain" description="Cytoplasmic" evidence="1">
    <location>
        <begin position="112"/>
        <end position="130"/>
    </location>
</feature>
<feature type="transmembrane region" description="Helical; Name=4" evidence="1">
    <location>
        <begin position="131"/>
        <end position="151"/>
    </location>
</feature>
<feature type="topological domain" description="Extracellular" evidence="1">
    <location>
        <begin position="152"/>
        <end position="188"/>
    </location>
</feature>
<feature type="transmembrane region" description="Helical; Name=5" evidence="1">
    <location>
        <begin position="189"/>
        <end position="208"/>
    </location>
</feature>
<feature type="topological domain" description="Cytoplasmic" evidence="1">
    <location>
        <begin position="209"/>
        <end position="228"/>
    </location>
</feature>
<feature type="transmembrane region" description="Helical; Name=6" evidence="1">
    <location>
        <begin position="229"/>
        <end position="249"/>
    </location>
</feature>
<feature type="topological domain" description="Extracellular" evidence="1">
    <location>
        <begin position="250"/>
        <end position="262"/>
    </location>
</feature>
<feature type="transmembrane region" description="Helical; Name=7" evidence="1">
    <location>
        <begin position="263"/>
        <end position="283"/>
    </location>
</feature>
<feature type="topological domain" description="Cytoplasmic" evidence="1">
    <location>
        <begin position="284"/>
        <end position="301"/>
    </location>
</feature>
<feature type="glycosylation site" description="N-linked (GlcNAc...) asparagine" evidence="1">
    <location>
        <position position="82"/>
    </location>
</feature>
<feature type="disulfide bond" evidence="2">
    <location>
        <begin position="88"/>
        <end position="180"/>
    </location>
</feature>
<protein>
    <recommendedName>
        <fullName>Olfactory receptor 10AG1</fullName>
    </recommendedName>
    <alternativeName>
        <fullName>Olfactory receptor OR11-160</fullName>
    </alternativeName>
</protein>
<reference key="1">
    <citation type="submission" date="2001-07" db="EMBL/GenBank/DDBJ databases">
        <title>Genome-wide discovery and analysis of human seven transmembrane helix receptor genes.</title>
        <authorList>
            <person name="Suwa M."/>
            <person name="Sato T."/>
            <person name="Okouchi I."/>
            <person name="Arita M."/>
            <person name="Futami K."/>
            <person name="Matsumoto S."/>
            <person name="Tsutsumi S."/>
            <person name="Aburatani H."/>
            <person name="Asai K."/>
            <person name="Akiyama Y."/>
        </authorList>
    </citation>
    <scope>NUCLEOTIDE SEQUENCE [GENOMIC DNA]</scope>
</reference>
<reference key="2">
    <citation type="submission" date="2005-07" db="EMBL/GenBank/DDBJ databases">
        <authorList>
            <person name="Mural R.J."/>
            <person name="Istrail S."/>
            <person name="Sutton G.G."/>
            <person name="Florea L."/>
            <person name="Halpern A.L."/>
            <person name="Mobarry C.M."/>
            <person name="Lippert R."/>
            <person name="Walenz B."/>
            <person name="Shatkay H."/>
            <person name="Dew I."/>
            <person name="Miller J.R."/>
            <person name="Flanigan M.J."/>
            <person name="Edwards N.J."/>
            <person name="Bolanos R."/>
            <person name="Fasulo D."/>
            <person name="Halldorsson B.V."/>
            <person name="Hannenhalli S."/>
            <person name="Turner R."/>
            <person name="Yooseph S."/>
            <person name="Lu F."/>
            <person name="Nusskern D.R."/>
            <person name="Shue B.C."/>
            <person name="Zheng X.H."/>
            <person name="Zhong F."/>
            <person name="Delcher A.L."/>
            <person name="Huson D.H."/>
            <person name="Kravitz S.A."/>
            <person name="Mouchard L."/>
            <person name="Reinert K."/>
            <person name="Remington K.A."/>
            <person name="Clark A.G."/>
            <person name="Waterman M.S."/>
            <person name="Eichler E.E."/>
            <person name="Adams M.D."/>
            <person name="Hunkapiller M.W."/>
            <person name="Myers E.W."/>
            <person name="Venter J.C."/>
        </authorList>
    </citation>
    <scope>NUCLEOTIDE SEQUENCE [LARGE SCALE GENOMIC DNA]</scope>
</reference>
<reference key="3">
    <citation type="journal article" date="2004" name="Genome Res.">
        <title>The status, quality, and expansion of the NIH full-length cDNA project: the Mammalian Gene Collection (MGC).</title>
        <authorList>
            <consortium name="The MGC Project Team"/>
        </authorList>
    </citation>
    <scope>NUCLEOTIDE SEQUENCE [LARGE SCALE MRNA]</scope>
</reference>
<reference key="4">
    <citation type="journal article" date="2004" name="Proc. Natl. Acad. Sci. U.S.A.">
        <title>The human olfactory receptor gene family.</title>
        <authorList>
            <person name="Malnic B."/>
            <person name="Godfrey P.A."/>
            <person name="Buck L.B."/>
        </authorList>
    </citation>
    <scope>IDENTIFICATION</scope>
</reference>
<reference key="5">
    <citation type="journal article" date="2004" name="Proc. Natl. Acad. Sci. U.S.A.">
        <authorList>
            <person name="Malnic B."/>
            <person name="Godfrey P.A."/>
            <person name="Buck L.B."/>
        </authorList>
    </citation>
    <scope>ERRATUM OF PUBMED:14983052</scope>
</reference>
<comment type="function">
    <text evidence="3">Odorant receptor.</text>
</comment>
<comment type="interaction">
    <interactant intactId="EBI-13339917">
        <id>Q8NH19</id>
    </interactant>
    <interactant intactId="EBI-12701138">
        <id>P41181</id>
        <label>AQP2</label>
    </interactant>
    <organismsDiffer>false</organismsDiffer>
    <experiments>3</experiments>
</comment>
<comment type="interaction">
    <interactant intactId="EBI-13339917">
        <id>Q8NH19</id>
    </interactant>
    <interactant intactId="EBI-6942903">
        <id>Q96BA8</id>
        <label>CREB3L1</label>
    </interactant>
    <organismsDiffer>false</organismsDiffer>
    <experiments>3</experiments>
</comment>
<comment type="interaction">
    <interactant intactId="EBI-13339917">
        <id>Q8NH19</id>
    </interactant>
    <interactant intactId="EBI-8787095">
        <id>O00559</id>
        <label>EBAG9</label>
    </interactant>
    <organismsDiffer>false</organismsDiffer>
    <experiments>3</experiments>
</comment>
<comment type="interaction">
    <interactant intactId="EBI-13339917">
        <id>Q8NH19</id>
    </interactant>
    <interactant intactId="EBI-2833872">
        <id>O15552</id>
        <label>FFAR2</label>
    </interactant>
    <organismsDiffer>false</organismsDiffer>
    <experiments>3</experiments>
</comment>
<comment type="interaction">
    <interactant intactId="EBI-13339917">
        <id>Q8NH19</id>
    </interactant>
    <interactant intactId="EBI-17263240">
        <id>P15941-11</id>
        <label>MUC1</label>
    </interactant>
    <organismsDiffer>false</organismsDiffer>
    <experiments>3</experiments>
</comment>
<comment type="subcellular location">
    <subcellularLocation>
        <location>Cell membrane</location>
        <topology>Multi-pass membrane protein</topology>
    </subcellularLocation>
</comment>
<comment type="similarity">
    <text evidence="2">Belongs to the G-protein coupled receptor 1 family.</text>
</comment>
<comment type="online information" name="Human Olfactory Receptor Data Exploratorium (HORDE)">
    <link uri="http://genome.weizmann.ac.il/horde/card/index/symbol:OR10AG1"/>
</comment>
<evidence type="ECO:0000255" key="1"/>
<evidence type="ECO:0000255" key="2">
    <source>
        <dbReference type="PROSITE-ProRule" id="PRU00521"/>
    </source>
</evidence>
<evidence type="ECO:0000305" key="3"/>
<keyword id="KW-1003">Cell membrane</keyword>
<keyword id="KW-1015">Disulfide bond</keyword>
<keyword id="KW-0297">G-protein coupled receptor</keyword>
<keyword id="KW-0325">Glycoprotein</keyword>
<keyword id="KW-0472">Membrane</keyword>
<keyword id="KW-0552">Olfaction</keyword>
<keyword id="KW-0675">Receptor</keyword>
<keyword id="KW-1185">Reference proteome</keyword>
<keyword id="KW-0716">Sensory transduction</keyword>
<keyword id="KW-0807">Transducer</keyword>
<keyword id="KW-0812">Transmembrane</keyword>
<keyword id="KW-1133">Transmembrane helix</keyword>
<sequence>MEFVLLGFSDIPNLHWMLFSIFLLMYLMILMCNGIIILLIKIHPALQTPMYFFLSNFSLLEICYVTIIIPRMLMDIWTQKGNISLFACATQMCFFLMLGGTECLLLTVMAYDRYVAICKPLQYPLVMNHKVCIQLIIASWTITIPVVIGETCQIFLLPFCGTNTINHFFCDIPPILKLACGNIFVNEITVHVVAVVFITVPFLLIVVSYGKIISNILKLSSARGKAKAFSTCSSHLIVVILFFGAGTITYLQPKPHQFQRMGKLISLFYTILIPTLNPIIYTLRNKDIMVALRKLLAKLLT</sequence>
<gene>
    <name type="primary">OR10AG1</name>
</gene>